<dbReference type="EC" id="5.3.1.23" evidence="1"/>
<dbReference type="EMBL" id="GG663383">
    <property type="protein sequence ID" value="EEH02644.1"/>
    <property type="molecule type" value="Genomic_DNA"/>
</dbReference>
<dbReference type="SMR" id="C0P108"/>
<dbReference type="FunCoup" id="C0P108">
    <property type="interactions" value="664"/>
</dbReference>
<dbReference type="STRING" id="447093.C0P108"/>
<dbReference type="VEuPathDB" id="FungiDB:I7I50_01626"/>
<dbReference type="HOGENOM" id="CLU_016218_1_3_1"/>
<dbReference type="InParanoid" id="C0P108"/>
<dbReference type="UniPathway" id="UPA00904">
    <property type="reaction ID" value="UER00874"/>
</dbReference>
<dbReference type="Proteomes" id="UP000001631">
    <property type="component" value="Unassembled WGS sequence"/>
</dbReference>
<dbReference type="GO" id="GO:0005737">
    <property type="term" value="C:cytoplasm"/>
    <property type="evidence" value="ECO:0007669"/>
    <property type="project" value="UniProtKB-SubCell"/>
</dbReference>
<dbReference type="GO" id="GO:0005634">
    <property type="term" value="C:nucleus"/>
    <property type="evidence" value="ECO:0007669"/>
    <property type="project" value="UniProtKB-SubCell"/>
</dbReference>
<dbReference type="GO" id="GO:0046523">
    <property type="term" value="F:S-methyl-5-thioribose-1-phosphate isomerase activity"/>
    <property type="evidence" value="ECO:0007669"/>
    <property type="project" value="UniProtKB-UniRule"/>
</dbReference>
<dbReference type="GO" id="GO:0019509">
    <property type="term" value="P:L-methionine salvage from methylthioadenosine"/>
    <property type="evidence" value="ECO:0007669"/>
    <property type="project" value="UniProtKB-UniRule"/>
</dbReference>
<dbReference type="FunFam" id="1.20.120.420:FF:000003">
    <property type="entry name" value="Methylthioribose-1-phosphate isomerase"/>
    <property type="match status" value="1"/>
</dbReference>
<dbReference type="FunFam" id="3.40.50.10470:FF:000003">
    <property type="entry name" value="Methylthioribose-1-phosphate isomerase"/>
    <property type="match status" value="1"/>
</dbReference>
<dbReference type="Gene3D" id="1.20.120.420">
    <property type="entry name" value="translation initiation factor eif-2b, domain 1"/>
    <property type="match status" value="1"/>
</dbReference>
<dbReference type="Gene3D" id="3.40.50.10470">
    <property type="entry name" value="Translation initiation factor eif-2b, domain 2"/>
    <property type="match status" value="1"/>
</dbReference>
<dbReference type="HAMAP" id="MF_01678">
    <property type="entry name" value="Salvage_MtnA"/>
    <property type="match status" value="1"/>
</dbReference>
<dbReference type="InterPro" id="IPR000649">
    <property type="entry name" value="IF-2B-related"/>
</dbReference>
<dbReference type="InterPro" id="IPR005251">
    <property type="entry name" value="IF-M1Pi"/>
</dbReference>
<dbReference type="InterPro" id="IPR042529">
    <property type="entry name" value="IF_2B-like_C"/>
</dbReference>
<dbReference type="InterPro" id="IPR011559">
    <property type="entry name" value="Initiation_fac_2B_a/b/d"/>
</dbReference>
<dbReference type="InterPro" id="IPR027363">
    <property type="entry name" value="M1Pi_N"/>
</dbReference>
<dbReference type="InterPro" id="IPR037171">
    <property type="entry name" value="NagB/RpiA_transferase-like"/>
</dbReference>
<dbReference type="NCBIfam" id="TIGR00524">
    <property type="entry name" value="eIF-2B_rel"/>
    <property type="match status" value="1"/>
</dbReference>
<dbReference type="NCBIfam" id="NF004326">
    <property type="entry name" value="PRK05720.1"/>
    <property type="match status" value="1"/>
</dbReference>
<dbReference type="NCBIfam" id="TIGR00512">
    <property type="entry name" value="salvage_mtnA"/>
    <property type="match status" value="1"/>
</dbReference>
<dbReference type="PANTHER" id="PTHR43475">
    <property type="entry name" value="METHYLTHIORIBOSE-1-PHOSPHATE ISOMERASE"/>
    <property type="match status" value="1"/>
</dbReference>
<dbReference type="PANTHER" id="PTHR43475:SF1">
    <property type="entry name" value="METHYLTHIORIBOSE-1-PHOSPHATE ISOMERASE"/>
    <property type="match status" value="1"/>
</dbReference>
<dbReference type="Pfam" id="PF01008">
    <property type="entry name" value="IF-2B"/>
    <property type="match status" value="1"/>
</dbReference>
<dbReference type="SUPFAM" id="SSF100950">
    <property type="entry name" value="NagB/RpiA/CoA transferase-like"/>
    <property type="match status" value="1"/>
</dbReference>
<reference key="1">
    <citation type="submission" date="2009-02" db="EMBL/GenBank/DDBJ databases">
        <title>The genome sequence of Ajellomyces capsulatus strain G186AR.</title>
        <authorList>
            <person name="Champion M."/>
            <person name="Cuomo C.A."/>
            <person name="Ma L.-J."/>
            <person name="Henn M.R."/>
            <person name="Sil A."/>
            <person name="Goldman B."/>
            <person name="Young S.K."/>
            <person name="Kodira C.D."/>
            <person name="Zeng Q."/>
            <person name="Koehrsen M."/>
            <person name="Alvarado L."/>
            <person name="Berlin A."/>
            <person name="Borenstein D."/>
            <person name="Chen Z."/>
            <person name="Engels R."/>
            <person name="Freedman E."/>
            <person name="Gellesch M."/>
            <person name="Goldberg J."/>
            <person name="Griggs A."/>
            <person name="Gujja S."/>
            <person name="Heiman D."/>
            <person name="Hepburn T."/>
            <person name="Howarth C."/>
            <person name="Jen D."/>
            <person name="Larson L."/>
            <person name="Lewis B."/>
            <person name="Mehta T."/>
            <person name="Park D."/>
            <person name="Pearson M."/>
            <person name="Roberts A."/>
            <person name="Saif S."/>
            <person name="Shea T."/>
            <person name="Shenoy N."/>
            <person name="Sisk P."/>
            <person name="Stolte C."/>
            <person name="Sykes S."/>
            <person name="Walk T."/>
            <person name="White J."/>
            <person name="Yandava C."/>
            <person name="Klein B."/>
            <person name="McEwen J.G."/>
            <person name="Puccia R."/>
            <person name="Goldman G.H."/>
            <person name="Felipe M.S."/>
            <person name="Nino-Vega G."/>
            <person name="San-Blas G."/>
            <person name="Taylor J."/>
            <person name="Mendoza L."/>
            <person name="Galagan J.E."/>
            <person name="Nusbaum C."/>
            <person name="Birren B.W."/>
        </authorList>
    </citation>
    <scope>NUCLEOTIDE SEQUENCE [LARGE SCALE GENOMIC DNA]</scope>
    <source>
        <strain>G186AR / H82 / ATCC MYA-2454 / RMSCC 2432</strain>
    </source>
</reference>
<feature type="chain" id="PRO_0000402007" description="Methylthioribose-1-phosphate isomerase">
    <location>
        <begin position="1"/>
        <end position="392"/>
    </location>
</feature>
<feature type="active site" description="Proton donor" evidence="1">
    <location>
        <position position="268"/>
    </location>
</feature>
<feature type="site" description="Transition state stabilizer" evidence="1">
    <location>
        <position position="180"/>
    </location>
</feature>
<comment type="function">
    <text evidence="1">Catalyzes the interconversion of methylthioribose-1-phosphate (MTR-1-P) into methylthioribulose-1-phosphate (MTRu-1-P).</text>
</comment>
<comment type="catalytic activity">
    <reaction evidence="1">
        <text>5-(methylsulfanyl)-alpha-D-ribose 1-phosphate = 5-(methylsulfanyl)-D-ribulose 1-phosphate</text>
        <dbReference type="Rhea" id="RHEA:19989"/>
        <dbReference type="ChEBI" id="CHEBI:58533"/>
        <dbReference type="ChEBI" id="CHEBI:58548"/>
        <dbReference type="EC" id="5.3.1.23"/>
    </reaction>
</comment>
<comment type="pathway">
    <text evidence="1">Amino-acid biosynthesis; L-methionine biosynthesis via salvage pathway; L-methionine from S-methyl-5-thio-alpha-D-ribose 1-phosphate: step 1/6.</text>
</comment>
<comment type="subcellular location">
    <subcellularLocation>
        <location evidence="1">Cytoplasm</location>
    </subcellularLocation>
    <subcellularLocation>
        <location evidence="1">Nucleus</location>
    </subcellularLocation>
</comment>
<comment type="similarity">
    <text evidence="1">Belongs to the eIF-2B alpha/beta/delta subunits family. MtnA subfamily.</text>
</comment>
<sequence>MTLVAITYTRGSLHILNQLLLPHQTTYDPLHSARDAWHAIHEMRVRGAPAIAIVAALSLAVELHTLATNNQLSAEPKDVELLILEKLEFLVSSRPTAVNLAEAAGRLGRIVNGRAQVQGVGGNEVAEAYIEAAERMLEDDVRDNRAIGESGAKWVLEHAITTKGSMSGTGQAKVAVLTHCNTGSLATAGYGTALGVIRSLHATGSLERAYCTETRPYNQGSRLTAFELVHDNIPATLITDNMAAALLARQSAGPAQSVGVSAIIVGADRVAANGDTANKIGTYGLAVLAKYHGVKFLVAAPRTTIDMNTKTGADIVIEERPEKEVTKIRGPRVGEEGNGLGAMETITVAADGIGVWNPAFDVTPAALVDGIITEVGVVEKDGSGVFHLERIF</sequence>
<proteinExistence type="inferred from homology"/>
<protein>
    <recommendedName>
        <fullName evidence="1">Methylthioribose-1-phosphate isomerase</fullName>
        <shortName evidence="1">M1Pi</shortName>
        <shortName evidence="1">MTR-1-P isomerase</shortName>
        <ecNumber evidence="1">5.3.1.23</ecNumber>
    </recommendedName>
    <alternativeName>
        <fullName evidence="1">S-methyl-5-thioribose-1-phosphate isomerase</fullName>
    </alternativeName>
    <alternativeName>
        <fullName evidence="1">Translation initiation factor eIF-2B subunit alpha/beta/delta-like protein</fullName>
    </alternativeName>
</protein>
<accession>C0P108</accession>
<gene>
    <name evidence="1" type="primary">MRI1</name>
    <name type="ORF">HCBG_09088</name>
</gene>
<name>MTNA_AJECG</name>
<keyword id="KW-0028">Amino-acid biosynthesis</keyword>
<keyword id="KW-0963">Cytoplasm</keyword>
<keyword id="KW-0413">Isomerase</keyword>
<keyword id="KW-0486">Methionine biosynthesis</keyword>
<keyword id="KW-0539">Nucleus</keyword>
<keyword id="KW-1185">Reference proteome</keyword>
<organism>
    <name type="scientific">Ajellomyces capsulatus (strain G186AR / H82 / ATCC MYA-2454 / RMSCC 2432)</name>
    <name type="common">Darling's disease fungus</name>
    <name type="synonym">Histoplasma capsulatum</name>
    <dbReference type="NCBI Taxonomy" id="447093"/>
    <lineage>
        <taxon>Eukaryota</taxon>
        <taxon>Fungi</taxon>
        <taxon>Dikarya</taxon>
        <taxon>Ascomycota</taxon>
        <taxon>Pezizomycotina</taxon>
        <taxon>Eurotiomycetes</taxon>
        <taxon>Eurotiomycetidae</taxon>
        <taxon>Onygenales</taxon>
        <taxon>Ajellomycetaceae</taxon>
        <taxon>Histoplasma</taxon>
    </lineage>
</organism>
<evidence type="ECO:0000255" key="1">
    <source>
        <dbReference type="HAMAP-Rule" id="MF_03119"/>
    </source>
</evidence>